<protein>
    <recommendedName>
        <fullName evidence="1">Small ribosomal subunit protein uS19</fullName>
    </recommendedName>
    <alternativeName>
        <fullName evidence="2">30S ribosomal protein S19</fullName>
    </alternativeName>
</protein>
<comment type="function">
    <text evidence="1">Protein S19 forms a complex with S13 that binds strongly to the 16S ribosomal RNA.</text>
</comment>
<comment type="similarity">
    <text evidence="1">Belongs to the universal ribosomal protein uS19 family.</text>
</comment>
<name>RS19_HERAR</name>
<evidence type="ECO:0000255" key="1">
    <source>
        <dbReference type="HAMAP-Rule" id="MF_00531"/>
    </source>
</evidence>
<evidence type="ECO:0000305" key="2"/>
<sequence>MTRSLKKGPFCDAHLVKKVETAQAIKDKKPIKTWSRRSTIMPDFIGLTIAVHNGKQHVPVYVSENMVGHKLGEFALTRTFKGHAADKKAKK</sequence>
<keyword id="KW-1185">Reference proteome</keyword>
<keyword id="KW-0687">Ribonucleoprotein</keyword>
<keyword id="KW-0689">Ribosomal protein</keyword>
<keyword id="KW-0694">RNA-binding</keyword>
<keyword id="KW-0699">rRNA-binding</keyword>
<proteinExistence type="inferred from homology"/>
<gene>
    <name evidence="1" type="primary">rpsS</name>
    <name type="ordered locus">HEAR3162</name>
</gene>
<reference key="1">
    <citation type="journal article" date="2007" name="PLoS Genet.">
        <title>A tale of two oxidation states: bacterial colonization of arsenic-rich environments.</title>
        <authorList>
            <person name="Muller D."/>
            <person name="Medigue C."/>
            <person name="Koechler S."/>
            <person name="Barbe V."/>
            <person name="Barakat M."/>
            <person name="Talla E."/>
            <person name="Bonnefoy V."/>
            <person name="Krin E."/>
            <person name="Arsene-Ploetze F."/>
            <person name="Carapito C."/>
            <person name="Chandler M."/>
            <person name="Cournoyer B."/>
            <person name="Cruveiller S."/>
            <person name="Dossat C."/>
            <person name="Duval S."/>
            <person name="Heymann M."/>
            <person name="Leize E."/>
            <person name="Lieutaud A."/>
            <person name="Lievremont D."/>
            <person name="Makita Y."/>
            <person name="Mangenot S."/>
            <person name="Nitschke W."/>
            <person name="Ortet P."/>
            <person name="Perdrial N."/>
            <person name="Schoepp B."/>
            <person name="Siguier P."/>
            <person name="Simeonova D.D."/>
            <person name="Rouy Z."/>
            <person name="Segurens B."/>
            <person name="Turlin E."/>
            <person name="Vallenet D."/>
            <person name="van Dorsselaer A."/>
            <person name="Weiss S."/>
            <person name="Weissenbach J."/>
            <person name="Lett M.-C."/>
            <person name="Danchin A."/>
            <person name="Bertin P.N."/>
        </authorList>
    </citation>
    <scope>NUCLEOTIDE SEQUENCE [LARGE SCALE GENOMIC DNA]</scope>
    <source>
        <strain>ULPAs1</strain>
    </source>
</reference>
<dbReference type="EMBL" id="CU207211">
    <property type="protein sequence ID" value="CAL63271.1"/>
    <property type="molecule type" value="Genomic_DNA"/>
</dbReference>
<dbReference type="SMR" id="A4G9T4"/>
<dbReference type="STRING" id="204773.HEAR3162"/>
<dbReference type="KEGG" id="har:HEAR3162"/>
<dbReference type="eggNOG" id="COG0185">
    <property type="taxonomic scope" value="Bacteria"/>
</dbReference>
<dbReference type="HOGENOM" id="CLU_144911_0_1_4"/>
<dbReference type="OrthoDB" id="9797833at2"/>
<dbReference type="Proteomes" id="UP000006697">
    <property type="component" value="Chromosome"/>
</dbReference>
<dbReference type="GO" id="GO:0005737">
    <property type="term" value="C:cytoplasm"/>
    <property type="evidence" value="ECO:0007669"/>
    <property type="project" value="UniProtKB-ARBA"/>
</dbReference>
<dbReference type="GO" id="GO:0015935">
    <property type="term" value="C:small ribosomal subunit"/>
    <property type="evidence" value="ECO:0007669"/>
    <property type="project" value="InterPro"/>
</dbReference>
<dbReference type="GO" id="GO:0019843">
    <property type="term" value="F:rRNA binding"/>
    <property type="evidence" value="ECO:0007669"/>
    <property type="project" value="UniProtKB-UniRule"/>
</dbReference>
<dbReference type="GO" id="GO:0003735">
    <property type="term" value="F:structural constituent of ribosome"/>
    <property type="evidence" value="ECO:0007669"/>
    <property type="project" value="InterPro"/>
</dbReference>
<dbReference type="GO" id="GO:0000028">
    <property type="term" value="P:ribosomal small subunit assembly"/>
    <property type="evidence" value="ECO:0007669"/>
    <property type="project" value="TreeGrafter"/>
</dbReference>
<dbReference type="GO" id="GO:0006412">
    <property type="term" value="P:translation"/>
    <property type="evidence" value="ECO:0007669"/>
    <property type="project" value="UniProtKB-UniRule"/>
</dbReference>
<dbReference type="FunFam" id="3.30.860.10:FF:000001">
    <property type="entry name" value="30S ribosomal protein S19"/>
    <property type="match status" value="1"/>
</dbReference>
<dbReference type="Gene3D" id="3.30.860.10">
    <property type="entry name" value="30s Ribosomal Protein S19, Chain A"/>
    <property type="match status" value="1"/>
</dbReference>
<dbReference type="HAMAP" id="MF_00531">
    <property type="entry name" value="Ribosomal_uS19"/>
    <property type="match status" value="1"/>
</dbReference>
<dbReference type="InterPro" id="IPR002222">
    <property type="entry name" value="Ribosomal_uS19"/>
</dbReference>
<dbReference type="InterPro" id="IPR005732">
    <property type="entry name" value="Ribosomal_uS19_bac-type"/>
</dbReference>
<dbReference type="InterPro" id="IPR020934">
    <property type="entry name" value="Ribosomal_uS19_CS"/>
</dbReference>
<dbReference type="InterPro" id="IPR023575">
    <property type="entry name" value="Ribosomal_uS19_SF"/>
</dbReference>
<dbReference type="NCBIfam" id="TIGR01050">
    <property type="entry name" value="rpsS_bact"/>
    <property type="match status" value="1"/>
</dbReference>
<dbReference type="PANTHER" id="PTHR11880">
    <property type="entry name" value="RIBOSOMAL PROTEIN S19P FAMILY MEMBER"/>
    <property type="match status" value="1"/>
</dbReference>
<dbReference type="PANTHER" id="PTHR11880:SF8">
    <property type="entry name" value="SMALL RIBOSOMAL SUBUNIT PROTEIN US19M"/>
    <property type="match status" value="1"/>
</dbReference>
<dbReference type="Pfam" id="PF00203">
    <property type="entry name" value="Ribosomal_S19"/>
    <property type="match status" value="1"/>
</dbReference>
<dbReference type="PIRSF" id="PIRSF002144">
    <property type="entry name" value="Ribosomal_S19"/>
    <property type="match status" value="1"/>
</dbReference>
<dbReference type="PRINTS" id="PR00975">
    <property type="entry name" value="RIBOSOMALS19"/>
</dbReference>
<dbReference type="SUPFAM" id="SSF54570">
    <property type="entry name" value="Ribosomal protein S19"/>
    <property type="match status" value="1"/>
</dbReference>
<dbReference type="PROSITE" id="PS00323">
    <property type="entry name" value="RIBOSOMAL_S19"/>
    <property type="match status" value="1"/>
</dbReference>
<organism>
    <name type="scientific">Herminiimonas arsenicoxydans</name>
    <dbReference type="NCBI Taxonomy" id="204773"/>
    <lineage>
        <taxon>Bacteria</taxon>
        <taxon>Pseudomonadati</taxon>
        <taxon>Pseudomonadota</taxon>
        <taxon>Betaproteobacteria</taxon>
        <taxon>Burkholderiales</taxon>
        <taxon>Oxalobacteraceae</taxon>
        <taxon>Herminiimonas</taxon>
    </lineage>
</organism>
<feature type="chain" id="PRO_1000051059" description="Small ribosomal subunit protein uS19">
    <location>
        <begin position="1"/>
        <end position="91"/>
    </location>
</feature>
<accession>A4G9T4</accession>